<feature type="chain" id="PRO_0000369545" description="Gap junction gamma-1 protein">
    <location>
        <begin position="1"/>
        <end position="377"/>
    </location>
</feature>
<feature type="topological domain" description="Cytoplasmic" evidence="2">
    <location>
        <begin position="1"/>
        <end position="18"/>
    </location>
</feature>
<feature type="transmembrane region" description="Helical" evidence="2">
    <location>
        <begin position="19"/>
        <end position="39"/>
    </location>
</feature>
<feature type="topological domain" description="Extracellular" evidence="2">
    <location>
        <begin position="40"/>
        <end position="75"/>
    </location>
</feature>
<feature type="transmembrane region" description="Helical" evidence="2">
    <location>
        <begin position="76"/>
        <end position="96"/>
    </location>
</feature>
<feature type="topological domain" description="Cytoplasmic" evidence="2">
    <location>
        <begin position="97"/>
        <end position="174"/>
    </location>
</feature>
<feature type="transmembrane region" description="Helical" evidence="2">
    <location>
        <begin position="175"/>
        <end position="197"/>
    </location>
</feature>
<feature type="topological domain" description="Extracellular" evidence="2">
    <location>
        <begin position="198"/>
        <end position="228"/>
    </location>
</feature>
<feature type="transmembrane region" description="Helical" evidence="2">
    <location>
        <begin position="229"/>
        <end position="249"/>
    </location>
</feature>
<feature type="topological domain" description="Cytoplasmic" evidence="2">
    <location>
        <begin position="250"/>
        <end position="377"/>
    </location>
</feature>
<feature type="region of interest" description="Disordered" evidence="3">
    <location>
        <begin position="129"/>
        <end position="163"/>
    </location>
</feature>
<feature type="region of interest" description="Disordered" evidence="3">
    <location>
        <begin position="265"/>
        <end position="294"/>
    </location>
</feature>
<feature type="region of interest" description="Disordered" evidence="3">
    <location>
        <begin position="334"/>
        <end position="377"/>
    </location>
</feature>
<feature type="compositionally biased region" description="Acidic residues" evidence="3">
    <location>
        <begin position="131"/>
        <end position="151"/>
    </location>
</feature>
<feature type="compositionally biased region" description="Polar residues" evidence="3">
    <location>
        <begin position="337"/>
        <end position="362"/>
    </location>
</feature>
<accession>Q6NZH5</accession>
<gene>
    <name type="primary">gjc1</name>
    <name type="synonym">gja7</name>
</gene>
<organism>
    <name type="scientific">Xenopus tropicalis</name>
    <name type="common">Western clawed frog</name>
    <name type="synonym">Silurana tropicalis</name>
    <dbReference type="NCBI Taxonomy" id="8364"/>
    <lineage>
        <taxon>Eukaryota</taxon>
        <taxon>Metazoa</taxon>
        <taxon>Chordata</taxon>
        <taxon>Craniata</taxon>
        <taxon>Vertebrata</taxon>
        <taxon>Euteleostomi</taxon>
        <taxon>Amphibia</taxon>
        <taxon>Batrachia</taxon>
        <taxon>Anura</taxon>
        <taxon>Pipoidea</taxon>
        <taxon>Pipidae</taxon>
        <taxon>Xenopodinae</taxon>
        <taxon>Xenopus</taxon>
        <taxon>Silurana</taxon>
    </lineage>
</organism>
<keyword id="KW-0965">Cell junction</keyword>
<keyword id="KW-1003">Cell membrane</keyword>
<keyword id="KW-0303">Gap junction</keyword>
<keyword id="KW-0472">Membrane</keyword>
<keyword id="KW-1185">Reference proteome</keyword>
<keyword id="KW-0812">Transmembrane</keyword>
<keyword id="KW-1133">Transmembrane helix</keyword>
<comment type="function">
    <text evidence="1">One gap junction consists of a cluster of closely packed pairs of transmembrane channels, the connexons, through which materials of low MW diffuse from one cell to a neighboring cell.</text>
</comment>
<comment type="subunit">
    <text evidence="1">A connexon is composed of a hexamer of connexins.</text>
</comment>
<comment type="subcellular location">
    <subcellularLocation>
        <location evidence="1">Cell membrane</location>
        <topology evidence="1">Multi-pass membrane protein</topology>
    </subcellularLocation>
    <subcellularLocation>
        <location evidence="1">Cell junction</location>
        <location evidence="1">Gap junction</location>
    </subcellularLocation>
</comment>
<comment type="similarity">
    <text evidence="4">Belongs to the connexin family. Gamma-type subfamily.</text>
</comment>
<sequence>MSWSFLTRLLEEINNHSTFVGKVWLTVLIIFRIVLTAVGGESIYYDEQSKFTCNTQQPGCENVCYDAFAPLSHVRFWVFQIILITTPSIMYLGFAMHRIARQPEMQIRRSEKTKSKKRAPIIHRGAMRDYEEAEDNQEEDPMICEEEEPEKDSEKGDKKKHDGRRRIKQDGLMKVYVLQLLFRSVFEVGFLMGQYILYGFEVIPFFVCSRKPCPHTVDCFVSRPTEKTIFLLIMYAVSALCLFLNLCELFHLGIGGIRDALRQKKKELQESRKKTPSAPPNYHSVLKKGRLPNGKPVFPGNGVSEGFELPTHELDRLRQHLKLAQEHLDLAFHLNPTGDNTHASRSSSPESNSIAAEQNRLNLAQEKGVGNREKSGL</sequence>
<evidence type="ECO:0000250" key="1"/>
<evidence type="ECO:0000255" key="2"/>
<evidence type="ECO:0000256" key="3">
    <source>
        <dbReference type="SAM" id="MobiDB-lite"/>
    </source>
</evidence>
<evidence type="ECO:0000305" key="4"/>
<name>CXG1_XENTR</name>
<reference key="1">
    <citation type="submission" date="2004-02" db="EMBL/GenBank/DDBJ databases">
        <authorList>
            <consortium name="NIH - Xenopus Gene Collection (XGC) project"/>
        </authorList>
    </citation>
    <scope>NUCLEOTIDE SEQUENCE [LARGE SCALE MRNA]</scope>
    <source>
        <tissue>Embryo</tissue>
    </source>
</reference>
<proteinExistence type="evidence at transcript level"/>
<dbReference type="EMBL" id="BC066131">
    <property type="protein sequence ID" value="AAH66131.1"/>
    <property type="molecule type" value="mRNA"/>
</dbReference>
<dbReference type="RefSeq" id="NP_991400.1">
    <property type="nucleotide sequence ID" value="NM_205831.1"/>
</dbReference>
<dbReference type="SMR" id="Q6NZH5"/>
<dbReference type="STRING" id="8364.ENSXETP00000044662"/>
<dbReference type="PaxDb" id="8364-ENSXETP00000031475"/>
<dbReference type="DNASU" id="403098"/>
<dbReference type="GeneID" id="403098"/>
<dbReference type="KEGG" id="xtr:403098"/>
<dbReference type="AGR" id="Xenbase:XB-GENE-5905096"/>
<dbReference type="CTD" id="403098"/>
<dbReference type="Xenbase" id="XB-GENE-5905096">
    <property type="gene designation" value="gja7"/>
</dbReference>
<dbReference type="eggNOG" id="ENOG502QVY2">
    <property type="taxonomic scope" value="Eukaryota"/>
</dbReference>
<dbReference type="InParanoid" id="Q6NZH5"/>
<dbReference type="OMA" id="KGTAACD"/>
<dbReference type="OrthoDB" id="10061722at2759"/>
<dbReference type="Proteomes" id="UP000008143">
    <property type="component" value="Chromosome 9"/>
</dbReference>
<dbReference type="Bgee" id="ENSXETG00000014395">
    <property type="expression patterns" value="Expressed in 4-cell stage embryo and 9 other cell types or tissues"/>
</dbReference>
<dbReference type="GO" id="GO:0005922">
    <property type="term" value="C:connexin complex"/>
    <property type="evidence" value="ECO:0007669"/>
    <property type="project" value="InterPro"/>
</dbReference>
<dbReference type="GO" id="GO:0007154">
    <property type="term" value="P:cell communication"/>
    <property type="evidence" value="ECO:0007669"/>
    <property type="project" value="InterPro"/>
</dbReference>
<dbReference type="FunFam" id="1.20.1440.80:FF:000003">
    <property type="entry name" value="Gap junction protein"/>
    <property type="match status" value="1"/>
</dbReference>
<dbReference type="Gene3D" id="1.20.1440.80">
    <property type="entry name" value="Gap junction channel protein cysteine-rich domain"/>
    <property type="match status" value="1"/>
</dbReference>
<dbReference type="InterPro" id="IPR000500">
    <property type="entry name" value="Connexin"/>
</dbReference>
<dbReference type="InterPro" id="IPR019570">
    <property type="entry name" value="Connexin_CCC"/>
</dbReference>
<dbReference type="InterPro" id="IPR017990">
    <property type="entry name" value="Connexin_CS"/>
</dbReference>
<dbReference type="InterPro" id="IPR013092">
    <property type="entry name" value="Connexin_N"/>
</dbReference>
<dbReference type="InterPro" id="IPR038359">
    <property type="entry name" value="Connexin_N_sf"/>
</dbReference>
<dbReference type="PANTHER" id="PTHR11984">
    <property type="entry name" value="CONNEXIN"/>
    <property type="match status" value="1"/>
</dbReference>
<dbReference type="PANTHER" id="PTHR11984:SF117">
    <property type="entry name" value="GAP JUNCTION PROTEIN"/>
    <property type="match status" value="1"/>
</dbReference>
<dbReference type="Pfam" id="PF00029">
    <property type="entry name" value="Connexin"/>
    <property type="match status" value="1"/>
</dbReference>
<dbReference type="PRINTS" id="PR00206">
    <property type="entry name" value="CONNEXIN"/>
</dbReference>
<dbReference type="SMART" id="SM00037">
    <property type="entry name" value="CNX"/>
    <property type="match status" value="1"/>
</dbReference>
<dbReference type="SMART" id="SM01089">
    <property type="entry name" value="Connexin_CCC"/>
    <property type="match status" value="1"/>
</dbReference>
<dbReference type="PROSITE" id="PS00407">
    <property type="entry name" value="CONNEXINS_1"/>
    <property type="match status" value="1"/>
</dbReference>
<dbReference type="PROSITE" id="PS00408">
    <property type="entry name" value="CONNEXINS_2"/>
    <property type="match status" value="1"/>
</dbReference>
<protein>
    <recommendedName>
        <fullName>Gap junction gamma-1 protein</fullName>
    </recommendedName>
    <alternativeName>
        <fullName>Gap junction alpha-7 protein</fullName>
    </alternativeName>
</protein>